<name>COX8B_BOVIN</name>
<accession>P10175</accession>
<accession>Q2KI98</accession>
<sequence length="70" mass="7639">MLRLAPTVRLLQAPLRGWAVPKAHITAKPAKTPTSPKEQAIGLSVTFLSFLLPAGWVLYHLDNYKKSSAA</sequence>
<organism>
    <name type="scientific">Bos taurus</name>
    <name type="common">Bovine</name>
    <dbReference type="NCBI Taxonomy" id="9913"/>
    <lineage>
        <taxon>Eukaryota</taxon>
        <taxon>Metazoa</taxon>
        <taxon>Chordata</taxon>
        <taxon>Craniata</taxon>
        <taxon>Vertebrata</taxon>
        <taxon>Euteleostomi</taxon>
        <taxon>Mammalia</taxon>
        <taxon>Eutheria</taxon>
        <taxon>Laurasiatheria</taxon>
        <taxon>Artiodactyla</taxon>
        <taxon>Ruminantia</taxon>
        <taxon>Pecora</taxon>
        <taxon>Bovidae</taxon>
        <taxon>Bovinae</taxon>
        <taxon>Bos</taxon>
    </lineage>
</organism>
<feature type="transit peptide" description="Mitochondrion" evidence="1 6">
    <location>
        <begin position="1"/>
        <end position="24"/>
    </location>
</feature>
<feature type="chain" id="PRO_0000006176" description="Cytochrome c oxidase subunit 8B, mitochondrial">
    <location>
        <begin position="25"/>
        <end position="70"/>
    </location>
</feature>
<feature type="topological domain" description="Mitochondrial matrix" evidence="3">
    <location>
        <begin position="25"/>
        <end position="35"/>
    </location>
</feature>
<feature type="transmembrane region" description="Helical" evidence="3">
    <location>
        <begin position="36"/>
        <end position="59"/>
    </location>
</feature>
<feature type="topological domain" description="Mitochondrial intermembrane" evidence="3">
    <location>
        <begin position="60"/>
        <end position="70"/>
    </location>
</feature>
<feature type="sequence conflict" description="In Ref. 1; AAA30466." evidence="8" ref="1">
    <original>A</original>
    <variation>V</variation>
    <location>
        <position position="19"/>
    </location>
</feature>
<feature type="sequence conflict" description="In Ref. 1; AAA30466." evidence="8" ref="1">
    <original>K</original>
    <variation>R</variation>
    <location>
        <position position="31"/>
    </location>
</feature>
<feature type="helix" evidence="10">
    <location>
        <begin position="36"/>
        <end position="59"/>
    </location>
</feature>
<feature type="turn" evidence="10">
    <location>
        <begin position="60"/>
        <end position="63"/>
    </location>
</feature>
<dbReference type="EMBL" id="J05202">
    <property type="protein sequence ID" value="AAA30466.1"/>
    <property type="molecule type" value="mRNA"/>
</dbReference>
<dbReference type="EMBL" id="U15540">
    <property type="protein sequence ID" value="AAA80279.1"/>
    <property type="molecule type" value="Genomic_DNA"/>
</dbReference>
<dbReference type="EMBL" id="BC112717">
    <property type="protein sequence ID" value="AAI12718.1"/>
    <property type="molecule type" value="mRNA"/>
</dbReference>
<dbReference type="PIR" id="A35537">
    <property type="entry name" value="OSBO8"/>
</dbReference>
<dbReference type="RefSeq" id="NP_001107989.1">
    <property type="nucleotide sequence ID" value="NM_001114517.2"/>
</dbReference>
<dbReference type="PDB" id="1OCC">
    <property type="method" value="X-ray"/>
    <property type="resolution" value="2.80 A"/>
    <property type="chains" value="M/Z=25-70"/>
</dbReference>
<dbReference type="PDB" id="1OCO">
    <property type="method" value="X-ray"/>
    <property type="resolution" value="2.80 A"/>
    <property type="chains" value="M/Z=25-70"/>
</dbReference>
<dbReference type="PDB" id="1OCR">
    <property type="method" value="X-ray"/>
    <property type="resolution" value="2.35 A"/>
    <property type="chains" value="M/Z=25-70"/>
</dbReference>
<dbReference type="PDB" id="1OCZ">
    <property type="method" value="X-ray"/>
    <property type="resolution" value="2.90 A"/>
    <property type="chains" value="M/Z=25-70"/>
</dbReference>
<dbReference type="PDB" id="1V54">
    <property type="method" value="X-ray"/>
    <property type="resolution" value="1.80 A"/>
    <property type="chains" value="M/Z=25-70"/>
</dbReference>
<dbReference type="PDB" id="1V55">
    <property type="method" value="X-ray"/>
    <property type="resolution" value="1.90 A"/>
    <property type="chains" value="M/Z=25-70"/>
</dbReference>
<dbReference type="PDB" id="2DYR">
    <property type="method" value="X-ray"/>
    <property type="resolution" value="1.80 A"/>
    <property type="chains" value="M/Z=25-70"/>
</dbReference>
<dbReference type="PDB" id="2DYS">
    <property type="method" value="X-ray"/>
    <property type="resolution" value="2.20 A"/>
    <property type="chains" value="M/Z=25-70"/>
</dbReference>
<dbReference type="PDB" id="2EIJ">
    <property type="method" value="X-ray"/>
    <property type="resolution" value="1.90 A"/>
    <property type="chains" value="M/Z=25-70"/>
</dbReference>
<dbReference type="PDB" id="2EIK">
    <property type="method" value="X-ray"/>
    <property type="resolution" value="2.10 A"/>
    <property type="chains" value="M/Z=25-70"/>
</dbReference>
<dbReference type="PDB" id="2EIL">
    <property type="method" value="X-ray"/>
    <property type="resolution" value="2.10 A"/>
    <property type="chains" value="M/Z=25-70"/>
</dbReference>
<dbReference type="PDB" id="2EIM">
    <property type="method" value="X-ray"/>
    <property type="resolution" value="2.60 A"/>
    <property type="chains" value="M/Z=25-70"/>
</dbReference>
<dbReference type="PDB" id="2EIN">
    <property type="method" value="X-ray"/>
    <property type="resolution" value="2.70 A"/>
    <property type="chains" value="M/Z=25-70"/>
</dbReference>
<dbReference type="PDB" id="2OCC">
    <property type="method" value="X-ray"/>
    <property type="resolution" value="2.30 A"/>
    <property type="chains" value="M/Z=25-70"/>
</dbReference>
<dbReference type="PDB" id="2Y69">
    <property type="method" value="X-ray"/>
    <property type="resolution" value="1.95 A"/>
    <property type="chains" value="M/Z=1-70"/>
</dbReference>
<dbReference type="PDB" id="2YBB">
    <property type="method" value="EM"/>
    <property type="resolution" value="19.00 A"/>
    <property type="chains" value="X=25-70"/>
</dbReference>
<dbReference type="PDB" id="2ZXW">
    <property type="method" value="X-ray"/>
    <property type="resolution" value="2.50 A"/>
    <property type="chains" value="M/Z=25-70"/>
</dbReference>
<dbReference type="PDB" id="3ABK">
    <property type="method" value="X-ray"/>
    <property type="resolution" value="2.00 A"/>
    <property type="chains" value="M/Z=25-70"/>
</dbReference>
<dbReference type="PDB" id="3ABL">
    <property type="method" value="X-ray"/>
    <property type="resolution" value="2.10 A"/>
    <property type="chains" value="M/Z=25-70"/>
</dbReference>
<dbReference type="PDB" id="3ABM">
    <property type="method" value="X-ray"/>
    <property type="resolution" value="1.95 A"/>
    <property type="chains" value="M/Z=25-70"/>
</dbReference>
<dbReference type="PDB" id="3AG1">
    <property type="method" value="X-ray"/>
    <property type="resolution" value="2.20 A"/>
    <property type="chains" value="M/Z=25-70"/>
</dbReference>
<dbReference type="PDB" id="3AG2">
    <property type="method" value="X-ray"/>
    <property type="resolution" value="1.80 A"/>
    <property type="chains" value="M/Z=25-70"/>
</dbReference>
<dbReference type="PDB" id="3AG3">
    <property type="method" value="X-ray"/>
    <property type="resolution" value="1.80 A"/>
    <property type="chains" value="M/Z=25-70"/>
</dbReference>
<dbReference type="PDB" id="3AG4">
    <property type="method" value="X-ray"/>
    <property type="resolution" value="2.05 A"/>
    <property type="chains" value="M/Z=25-70"/>
</dbReference>
<dbReference type="PDB" id="3ASN">
    <property type="method" value="X-ray"/>
    <property type="resolution" value="3.00 A"/>
    <property type="chains" value="M/Z=25-70"/>
</dbReference>
<dbReference type="PDB" id="3ASO">
    <property type="method" value="X-ray"/>
    <property type="resolution" value="2.30 A"/>
    <property type="chains" value="M/Z=25-70"/>
</dbReference>
<dbReference type="PDB" id="3WG7">
    <property type="method" value="X-ray"/>
    <property type="resolution" value="1.90 A"/>
    <property type="chains" value="M/Z=25-70"/>
</dbReference>
<dbReference type="PDB" id="3X2Q">
    <property type="method" value="X-ray"/>
    <property type="resolution" value="2.00 A"/>
    <property type="chains" value="M/Z=25-70"/>
</dbReference>
<dbReference type="PDB" id="5B1A">
    <property type="method" value="X-ray"/>
    <property type="resolution" value="1.50 A"/>
    <property type="chains" value="M/Z=25-70"/>
</dbReference>
<dbReference type="PDB" id="5B1B">
    <property type="method" value="X-ray"/>
    <property type="resolution" value="1.60 A"/>
    <property type="chains" value="M/Z=25-70"/>
</dbReference>
<dbReference type="PDB" id="5B3S">
    <property type="method" value="X-ray"/>
    <property type="resolution" value="1.68 A"/>
    <property type="chains" value="M/Z=25-70"/>
</dbReference>
<dbReference type="PDB" id="5GPN">
    <property type="method" value="EM"/>
    <property type="resolution" value="5.40 A"/>
    <property type="chains" value="s=25-70"/>
</dbReference>
<dbReference type="PDB" id="5IY5">
    <property type="method" value="X-ray"/>
    <property type="resolution" value="2.00 A"/>
    <property type="chains" value="M/Z=25-67"/>
</dbReference>
<dbReference type="PDB" id="5LUF">
    <property type="method" value="EM"/>
    <property type="resolution" value="9.10 A"/>
    <property type="chains" value="0=25-70"/>
</dbReference>
<dbReference type="PDB" id="5W97">
    <property type="method" value="X-ray"/>
    <property type="resolution" value="2.30 A"/>
    <property type="chains" value="M/m=25-70"/>
</dbReference>
<dbReference type="PDB" id="5WAU">
    <property type="method" value="X-ray"/>
    <property type="resolution" value="1.95 A"/>
    <property type="chains" value="M/m=25-70"/>
</dbReference>
<dbReference type="PDB" id="5X19">
    <property type="method" value="X-ray"/>
    <property type="resolution" value="2.20 A"/>
    <property type="chains" value="M/Z=25-70"/>
</dbReference>
<dbReference type="PDB" id="5X1B">
    <property type="method" value="X-ray"/>
    <property type="resolution" value="2.40 A"/>
    <property type="chains" value="M/Z=25-70"/>
</dbReference>
<dbReference type="PDB" id="5X1F">
    <property type="method" value="X-ray"/>
    <property type="resolution" value="2.20 A"/>
    <property type="chains" value="M/Z=25-70"/>
</dbReference>
<dbReference type="PDB" id="5XDQ">
    <property type="method" value="X-ray"/>
    <property type="resolution" value="1.77 A"/>
    <property type="chains" value="M/Z=25-70"/>
</dbReference>
<dbReference type="PDB" id="5XDX">
    <property type="method" value="X-ray"/>
    <property type="resolution" value="1.99 A"/>
    <property type="chains" value="M/Z=25-70"/>
</dbReference>
<dbReference type="PDB" id="5XTH">
    <property type="method" value="EM"/>
    <property type="resolution" value="3.90 A"/>
    <property type="chains" value="9=25-67"/>
</dbReference>
<dbReference type="PDB" id="5XTI">
    <property type="method" value="EM"/>
    <property type="resolution" value="17.40 A"/>
    <property type="chains" value="9/B9=25-67"/>
</dbReference>
<dbReference type="PDB" id="5Z84">
    <property type="method" value="X-ray"/>
    <property type="resolution" value="1.85 A"/>
    <property type="chains" value="M/Z=25-70"/>
</dbReference>
<dbReference type="PDB" id="5Z85">
    <property type="method" value="X-ray"/>
    <property type="resolution" value="1.85 A"/>
    <property type="chains" value="M/Z=25-70"/>
</dbReference>
<dbReference type="PDB" id="5Z86">
    <property type="method" value="X-ray"/>
    <property type="resolution" value="1.85 A"/>
    <property type="chains" value="M/Z=25-70"/>
</dbReference>
<dbReference type="PDB" id="5ZCO">
    <property type="method" value="X-ray"/>
    <property type="resolution" value="1.90 A"/>
    <property type="chains" value="M/Z=25-70"/>
</dbReference>
<dbReference type="PDB" id="5ZCP">
    <property type="method" value="X-ray"/>
    <property type="resolution" value="1.65 A"/>
    <property type="chains" value="M/Z=25-70"/>
</dbReference>
<dbReference type="PDB" id="5ZCQ">
    <property type="method" value="X-ray"/>
    <property type="resolution" value="1.65 A"/>
    <property type="chains" value="M/Z=25-70"/>
</dbReference>
<dbReference type="PDB" id="6J8M">
    <property type="method" value="X-ray"/>
    <property type="resolution" value="1.90 A"/>
    <property type="chains" value="M/Z=25-70"/>
</dbReference>
<dbReference type="PDB" id="6JUW">
    <property type="method" value="X-ray"/>
    <property type="resolution" value="1.80 A"/>
    <property type="chains" value="M/Z=25-67"/>
</dbReference>
<dbReference type="PDB" id="6JY3">
    <property type="method" value="X-ray"/>
    <property type="resolution" value="1.85 A"/>
    <property type="chains" value="M=25-70"/>
</dbReference>
<dbReference type="PDB" id="6JY4">
    <property type="method" value="X-ray"/>
    <property type="resolution" value="1.95 A"/>
    <property type="chains" value="M=25-70"/>
</dbReference>
<dbReference type="PDB" id="6NKN">
    <property type="method" value="X-ray"/>
    <property type="resolution" value="2.50 A"/>
    <property type="chains" value="M/Z=25-70"/>
</dbReference>
<dbReference type="PDB" id="6NMF">
    <property type="method" value="X-ray"/>
    <property type="resolution" value="2.80 A"/>
    <property type="chains" value="M/Z=25-70"/>
</dbReference>
<dbReference type="PDB" id="6NMP">
    <property type="method" value="X-ray"/>
    <property type="resolution" value="2.90 A"/>
    <property type="chains" value="M/Z=25-70"/>
</dbReference>
<dbReference type="PDB" id="7COH">
    <property type="method" value="X-ray"/>
    <property type="resolution" value="1.30 A"/>
    <property type="chains" value="M/Z=25-70"/>
</dbReference>
<dbReference type="PDB" id="7CP5">
    <property type="method" value="X-ray"/>
    <property type="resolution" value="1.76 A"/>
    <property type="chains" value="M/Z=25-67"/>
</dbReference>
<dbReference type="PDB" id="7D5W">
    <property type="method" value="X-ray"/>
    <property type="resolution" value="1.84 A"/>
    <property type="chains" value="M/Z=25-67"/>
</dbReference>
<dbReference type="PDB" id="7D5X">
    <property type="method" value="X-ray"/>
    <property type="resolution" value="1.74 A"/>
    <property type="chains" value="M/Z=25-67"/>
</dbReference>
<dbReference type="PDB" id="7DGQ">
    <property type="method" value="EM"/>
    <property type="resolution" value="5.00 A"/>
    <property type="chains" value="A8=1-70"/>
</dbReference>
<dbReference type="PDB" id="7DGR">
    <property type="method" value="EM"/>
    <property type="resolution" value="4.60 A"/>
    <property type="chains" value="A8=1-70"/>
</dbReference>
<dbReference type="PDB" id="7DGS">
    <property type="method" value="EM"/>
    <property type="resolution" value="7.80 A"/>
    <property type="chains" value="A8=1-70"/>
</dbReference>
<dbReference type="PDB" id="7DKF">
    <property type="method" value="EM"/>
    <property type="resolution" value="8.30 A"/>
    <property type="chains" value="M3=1-70"/>
</dbReference>
<dbReference type="PDB" id="7EV7">
    <property type="method" value="X-ray"/>
    <property type="resolution" value="1.70 A"/>
    <property type="chains" value="M/Z=25-70"/>
</dbReference>
<dbReference type="PDB" id="7THU">
    <property type="method" value="X-ray"/>
    <property type="resolution" value="1.93 A"/>
    <property type="chains" value="MMM/ZZZ=25-70"/>
</dbReference>
<dbReference type="PDB" id="7TIE">
    <property type="method" value="X-ray"/>
    <property type="resolution" value="1.90 A"/>
    <property type="chains" value="MMM/ZZZ=25-70"/>
</dbReference>
<dbReference type="PDB" id="7TIH">
    <property type="method" value="X-ray"/>
    <property type="resolution" value="2.35 A"/>
    <property type="chains" value="MMM/ZZZ=25-70"/>
</dbReference>
<dbReference type="PDB" id="7TII">
    <property type="method" value="X-ray"/>
    <property type="resolution" value="2.45 A"/>
    <property type="chains" value="MMM/ZZZ=25-70"/>
</dbReference>
<dbReference type="PDB" id="7VUW">
    <property type="method" value="X-ray"/>
    <property type="resolution" value="1.60 A"/>
    <property type="chains" value="M/Z=25-67"/>
</dbReference>
<dbReference type="PDB" id="7VVR">
    <property type="method" value="X-ray"/>
    <property type="resolution" value="1.65 A"/>
    <property type="chains" value="M/Z=25-67"/>
</dbReference>
<dbReference type="PDB" id="7W3E">
    <property type="method" value="X-ray"/>
    <property type="resolution" value="1.45 A"/>
    <property type="chains" value="M/Z=25-65"/>
</dbReference>
<dbReference type="PDB" id="7XMA">
    <property type="method" value="X-ray"/>
    <property type="resolution" value="2.20 A"/>
    <property type="chains" value="M/Z=25-70"/>
</dbReference>
<dbReference type="PDB" id="7XMB">
    <property type="method" value="X-ray"/>
    <property type="resolution" value="2.20 A"/>
    <property type="chains" value="M/Z=25-70"/>
</dbReference>
<dbReference type="PDB" id="7Y44">
    <property type="method" value="X-ray"/>
    <property type="resolution" value="1.90 A"/>
    <property type="chains" value="M/Z=25-70"/>
</dbReference>
<dbReference type="PDB" id="7YPY">
    <property type="method" value="X-ray"/>
    <property type="resolution" value="1.50 A"/>
    <property type="chains" value="M/Z=25-70"/>
</dbReference>
<dbReference type="PDB" id="8GBT">
    <property type="method" value="X-ray"/>
    <property type="resolution" value="2.80 A"/>
    <property type="chains" value="M/Z=25-70"/>
</dbReference>
<dbReference type="PDB" id="8GCQ">
    <property type="method" value="X-ray"/>
    <property type="resolution" value="2.38 A"/>
    <property type="chains" value="M/Z=25-70"/>
</dbReference>
<dbReference type="PDB" id="8GVM">
    <property type="method" value="X-ray"/>
    <property type="resolution" value="1.85 A"/>
    <property type="chains" value="M/Z=25-70"/>
</dbReference>
<dbReference type="PDB" id="8H8R">
    <property type="method" value="X-ray"/>
    <property type="resolution" value="1.70 A"/>
    <property type="chains" value="M/Z=25-70"/>
</dbReference>
<dbReference type="PDB" id="8H8S">
    <property type="method" value="X-ray"/>
    <property type="resolution" value="1.70 A"/>
    <property type="chains" value="M/Z=25-70"/>
</dbReference>
<dbReference type="PDB" id="8IJN">
    <property type="method" value="X-ray"/>
    <property type="resolution" value="1.80 A"/>
    <property type="chains" value="M/Z=25-70"/>
</dbReference>
<dbReference type="PDBsum" id="1OCC"/>
<dbReference type="PDBsum" id="1OCO"/>
<dbReference type="PDBsum" id="1OCR"/>
<dbReference type="PDBsum" id="1OCZ"/>
<dbReference type="PDBsum" id="1V54"/>
<dbReference type="PDBsum" id="1V55"/>
<dbReference type="PDBsum" id="2DYR"/>
<dbReference type="PDBsum" id="2DYS"/>
<dbReference type="PDBsum" id="2EIJ"/>
<dbReference type="PDBsum" id="2EIK"/>
<dbReference type="PDBsum" id="2EIL"/>
<dbReference type="PDBsum" id="2EIM"/>
<dbReference type="PDBsum" id="2EIN"/>
<dbReference type="PDBsum" id="2OCC"/>
<dbReference type="PDBsum" id="2Y69"/>
<dbReference type="PDBsum" id="2YBB"/>
<dbReference type="PDBsum" id="2ZXW"/>
<dbReference type="PDBsum" id="3ABK"/>
<dbReference type="PDBsum" id="3ABL"/>
<dbReference type="PDBsum" id="3ABM"/>
<dbReference type="PDBsum" id="3AG1"/>
<dbReference type="PDBsum" id="3AG2"/>
<dbReference type="PDBsum" id="3AG3"/>
<dbReference type="PDBsum" id="3AG4"/>
<dbReference type="PDBsum" id="3ASN"/>
<dbReference type="PDBsum" id="3ASO"/>
<dbReference type="PDBsum" id="3WG7"/>
<dbReference type="PDBsum" id="3X2Q"/>
<dbReference type="PDBsum" id="5B1A"/>
<dbReference type="PDBsum" id="5B1B"/>
<dbReference type="PDBsum" id="5B3S"/>
<dbReference type="PDBsum" id="5GPN"/>
<dbReference type="PDBsum" id="5IY5"/>
<dbReference type="PDBsum" id="5LUF"/>
<dbReference type="PDBsum" id="5W97"/>
<dbReference type="PDBsum" id="5WAU"/>
<dbReference type="PDBsum" id="5X19"/>
<dbReference type="PDBsum" id="5X1B"/>
<dbReference type="PDBsum" id="5X1F"/>
<dbReference type="PDBsum" id="5XDQ"/>
<dbReference type="PDBsum" id="5XDX"/>
<dbReference type="PDBsum" id="5XTH"/>
<dbReference type="PDBsum" id="5XTI"/>
<dbReference type="PDBsum" id="5Z84"/>
<dbReference type="PDBsum" id="5Z85"/>
<dbReference type="PDBsum" id="5Z86"/>
<dbReference type="PDBsum" id="5ZCO"/>
<dbReference type="PDBsum" id="5ZCP"/>
<dbReference type="PDBsum" id="5ZCQ"/>
<dbReference type="PDBsum" id="6J8M"/>
<dbReference type="PDBsum" id="6JUW"/>
<dbReference type="PDBsum" id="6JY3"/>
<dbReference type="PDBsum" id="6JY4"/>
<dbReference type="PDBsum" id="6NKN"/>
<dbReference type="PDBsum" id="6NMF"/>
<dbReference type="PDBsum" id="6NMP"/>
<dbReference type="PDBsum" id="7COH"/>
<dbReference type="PDBsum" id="7CP5"/>
<dbReference type="PDBsum" id="7D5W"/>
<dbReference type="PDBsum" id="7D5X"/>
<dbReference type="PDBsum" id="7DGQ"/>
<dbReference type="PDBsum" id="7DGR"/>
<dbReference type="PDBsum" id="7DGS"/>
<dbReference type="PDBsum" id="7DKF"/>
<dbReference type="PDBsum" id="7EV7"/>
<dbReference type="PDBsum" id="7THU"/>
<dbReference type="PDBsum" id="7TIE"/>
<dbReference type="PDBsum" id="7TIH"/>
<dbReference type="PDBsum" id="7TII"/>
<dbReference type="PDBsum" id="7VUW"/>
<dbReference type="PDBsum" id="7VVR"/>
<dbReference type="PDBsum" id="7W3E"/>
<dbReference type="PDBsum" id="7XMA"/>
<dbReference type="PDBsum" id="7XMB"/>
<dbReference type="PDBsum" id="7Y44"/>
<dbReference type="PDBsum" id="7YPY"/>
<dbReference type="PDBsum" id="8GBT"/>
<dbReference type="PDBsum" id="8GCQ"/>
<dbReference type="PDBsum" id="8GVM"/>
<dbReference type="PDBsum" id="8H8R"/>
<dbReference type="PDBsum" id="8H8S"/>
<dbReference type="PDBsum" id="8IJN"/>
<dbReference type="EMDB" id="EMD-30673"/>
<dbReference type="EMDB" id="EMD-30674"/>
<dbReference type="EMDB" id="EMD-30675"/>
<dbReference type="EMDB" id="EMD-30706"/>
<dbReference type="EMDB" id="EMD-4107"/>
<dbReference type="EMDB" id="EMD-9534"/>
<dbReference type="SMR" id="P10175"/>
<dbReference type="CORUM" id="P10175"/>
<dbReference type="DIP" id="DIP-60941N"/>
<dbReference type="FunCoup" id="P10175">
    <property type="interactions" value="86"/>
</dbReference>
<dbReference type="IntAct" id="P10175">
    <property type="interactions" value="1"/>
</dbReference>
<dbReference type="STRING" id="9913.ENSBTAP00000002651"/>
<dbReference type="PaxDb" id="9913-ENSBTAP00000002651"/>
<dbReference type="GeneID" id="615757"/>
<dbReference type="KEGG" id="bta:615757"/>
<dbReference type="CTD" id="12869"/>
<dbReference type="eggNOG" id="ENOG502SB3F">
    <property type="taxonomic scope" value="Eukaryota"/>
</dbReference>
<dbReference type="HOGENOM" id="CLU_203368_0_0_1"/>
<dbReference type="InParanoid" id="P10175"/>
<dbReference type="OrthoDB" id="8931496at2759"/>
<dbReference type="TreeFam" id="TF105070"/>
<dbReference type="BRENDA" id="7.1.1.9">
    <property type="organism ID" value="908"/>
</dbReference>
<dbReference type="UniPathway" id="UPA00705"/>
<dbReference type="EvolutionaryTrace" id="P10175"/>
<dbReference type="Proteomes" id="UP000009136">
    <property type="component" value="Unplaced"/>
</dbReference>
<dbReference type="GO" id="GO:0005743">
    <property type="term" value="C:mitochondrial inner membrane"/>
    <property type="evidence" value="ECO:0007669"/>
    <property type="project" value="UniProtKB-SubCell"/>
</dbReference>
<dbReference type="GO" id="GO:0005739">
    <property type="term" value="C:mitochondrion"/>
    <property type="evidence" value="ECO:0000318"/>
    <property type="project" value="GO_Central"/>
</dbReference>
<dbReference type="GO" id="GO:0045277">
    <property type="term" value="C:respiratory chain complex IV"/>
    <property type="evidence" value="ECO:0000314"/>
    <property type="project" value="UniProtKB"/>
</dbReference>
<dbReference type="GO" id="GO:0006123">
    <property type="term" value="P:mitochondrial electron transport, cytochrome c to oxygen"/>
    <property type="evidence" value="ECO:0007669"/>
    <property type="project" value="InterPro"/>
</dbReference>
<dbReference type="CDD" id="cd00930">
    <property type="entry name" value="Cyt_c_Oxidase_VIII"/>
    <property type="match status" value="1"/>
</dbReference>
<dbReference type="FunFam" id="4.10.81.10:FF:000001">
    <property type="entry name" value="Cytochrome c oxidase subunit 8B, mitochondrial"/>
    <property type="match status" value="1"/>
</dbReference>
<dbReference type="Gene3D" id="4.10.81.10">
    <property type="entry name" value="Cytochrome c oxidase, subunit 8"/>
    <property type="match status" value="1"/>
</dbReference>
<dbReference type="InterPro" id="IPR003205">
    <property type="entry name" value="Cyt_c_oxidase_su8"/>
</dbReference>
<dbReference type="InterPro" id="IPR036548">
    <property type="entry name" value="Cyt_c_oxidase_su8_sf"/>
</dbReference>
<dbReference type="PANTHER" id="PTHR16717">
    <property type="entry name" value="CYTOCHROME C OXIDASE POLYPEPTIDE VIII"/>
    <property type="match status" value="1"/>
</dbReference>
<dbReference type="PANTHER" id="PTHR16717:SF4">
    <property type="entry name" value="CYTOCHROME C OXIDASE SUBUNIT 8B, MITOCHONDRIAL"/>
    <property type="match status" value="1"/>
</dbReference>
<dbReference type="Pfam" id="PF02285">
    <property type="entry name" value="COX8"/>
    <property type="match status" value="1"/>
</dbReference>
<dbReference type="SUPFAM" id="SSF81431">
    <property type="entry name" value="Mitochondrial cytochrome c oxidase subunit VIIIb (aka IX)"/>
    <property type="match status" value="1"/>
</dbReference>
<evidence type="ECO:0000269" key="1">
    <source>
    </source>
</evidence>
<evidence type="ECO:0000269" key="2">
    <source>
    </source>
</evidence>
<evidence type="ECO:0000269" key="3">
    <source>
    </source>
</evidence>
<evidence type="ECO:0000269" key="4">
    <source>
    </source>
</evidence>
<evidence type="ECO:0000269" key="5">
    <source>
    </source>
</evidence>
<evidence type="ECO:0000269" key="6">
    <source>
    </source>
</evidence>
<evidence type="ECO:0000269" key="7">
    <source>
    </source>
</evidence>
<evidence type="ECO:0000305" key="8"/>
<evidence type="ECO:0000305" key="9">
    <source>
    </source>
</evidence>
<evidence type="ECO:0007829" key="10">
    <source>
        <dbReference type="PDB" id="7COH"/>
    </source>
</evidence>
<reference key="1">
    <citation type="journal article" date="1990" name="J. Biol. Chem.">
        <title>Isolation and characterization of the cDNAs encoding two isoforms of subunit CIX of bovine cytochrome c oxidase.</title>
        <authorList>
            <person name="Lightowlers R.N."/>
            <person name="Ewart G.D."/>
            <person name="Aggeler R.J."/>
            <person name="Zhang Y.-Z."/>
            <person name="Calavetta L."/>
            <person name="Capaldi R.A."/>
        </authorList>
    </citation>
    <scope>NUCLEOTIDE SEQUENCE [MRNA]</scope>
    <source>
        <tissue>Heart</tissue>
    </source>
</reference>
<reference key="2">
    <citation type="journal article" date="1995" name="Mamm. Genome">
        <title>Structure and chromosomal location of the bovine gene for the heart muscle isoform of cytochrome c oxidase subunit VIII.</title>
        <authorList>
            <person name="Lomax M.I."/>
            <person name="Riggs P.K."/>
            <person name="Womack J.E."/>
        </authorList>
    </citation>
    <scope>NUCLEOTIDE SEQUENCE [GENOMIC DNA]</scope>
</reference>
<reference key="3">
    <citation type="submission" date="2006-01" db="EMBL/GenBank/DDBJ databases">
        <authorList>
            <consortium name="NIH - Mammalian Gene Collection (MGC) project"/>
        </authorList>
    </citation>
    <scope>NUCLEOTIDE SEQUENCE [LARGE SCALE MRNA]</scope>
    <source>
        <strain>Hereford</strain>
        <tissue>Rumen</tissue>
    </source>
</reference>
<reference key="4">
    <citation type="journal article" date="1984" name="Hoppe-Seyler's Z. Physiol. Chem.">
        <title>Studies on cytochrome c oxidase, X. Isolation and amino-acid sequence of polypeptide VIIIb.</title>
        <authorList>
            <person name="Meinecke L."/>
            <person name="Steffens G.J."/>
            <person name="Buse G."/>
        </authorList>
    </citation>
    <scope>PROTEIN SEQUENCE OF 25-70</scope>
    <source>
        <tissue>Heart</tissue>
    </source>
</reference>
<reference key="5">
    <citation type="journal article" date="1990" name="FEBS Lett.">
        <title>Different isozymes of cytochrome c oxidase are expressed in bovine smooth muscle and skeletal or heart muscle.</title>
        <authorList>
            <person name="Anthony G."/>
            <person name="Stroh A."/>
            <person name="Lottspeich F."/>
            <person name="Kadenbach B."/>
        </authorList>
    </citation>
    <scope>PROTEIN SEQUENCE OF 25-30</scope>
    <source>
        <tissue>Heart</tissue>
    </source>
</reference>
<reference key="6">
    <citation type="journal article" date="2016" name="J. Biol. Chem.">
        <title>Purification of active respiratory supercomplex from bovine heart mitochondria enables functional studies.</title>
        <authorList>
            <person name="Shinzawa-Itoh K."/>
            <person name="Shimomura H."/>
            <person name="Yanagisawa S."/>
            <person name="Shimada S."/>
            <person name="Takahashi R."/>
            <person name="Oosaki M."/>
            <person name="Ogura T."/>
            <person name="Tsukihara T."/>
        </authorList>
    </citation>
    <scope>SUBUNIT</scope>
</reference>
<reference key="7">
    <citation type="journal article" date="1996" name="Science">
        <title>The whole structure of the 13-subunit oxidized cytochrome c oxidase at 2.8 A.</title>
        <authorList>
            <person name="Tsukihara T."/>
            <person name="Aoyama H."/>
            <person name="Yamashita E."/>
            <person name="Tomizaki T."/>
            <person name="Yamaguchi H."/>
            <person name="Shinzawa-Itoh K."/>
            <person name="Nakashima R."/>
            <person name="Yaono R."/>
            <person name="Yoshikawa S."/>
        </authorList>
    </citation>
    <scope>X-RAY CRYSTALLOGRAPHY (2.8 ANGSTROMS) OF 25-70</scope>
</reference>
<reference key="8">
    <citation type="journal article" date="1999" name="Acta Crystallogr. D">
        <title>Structure analysis of bovine heart cytochrome c oxidase at 2.8 A resolution.</title>
        <authorList>
            <person name="Tomizaki T."/>
            <person name="Yamashita E."/>
            <person name="Yamaguchi H."/>
            <person name="Aoyama H."/>
            <person name="Tsukihara T."/>
            <person name="Shinzawa-Itoh K."/>
            <person name="Nakashima R."/>
            <person name="Yaono R."/>
            <person name="Yoshikawa S."/>
        </authorList>
    </citation>
    <scope>X-RAY CRYSTALLOGRAPHY (2.8 ANGSTROMS) OF 25-70</scope>
    <source>
        <tissue>Heart</tissue>
    </source>
</reference>
<reference key="9">
    <citation type="journal article" date="2000" name="Acta Crystallogr. D">
        <title>X-ray structure of azide-bound fully oxidized cytochrome c oxidase from bovine heart at 2.9 A resolution.</title>
        <authorList>
            <person name="Fei M.J."/>
            <person name="Yamashita E."/>
            <person name="Inoue N."/>
            <person name="Yao M."/>
            <person name="Yamaguchi H."/>
            <person name="Tsukihara T."/>
            <person name="Shinzawa-Itoh K."/>
            <person name="Nakashima R."/>
            <person name="Yoshikawa S."/>
        </authorList>
    </citation>
    <scope>X-RAY CRYSTALLOGRAPHY (2.9 ANGSTROMS) OF 25-70</scope>
    <source>
        <tissue>Heart</tissue>
    </source>
</reference>
<reference key="10">
    <citation type="journal article" date="2010" name="Proc. Natl. Acad. Sci. U.S.A.">
        <title>Bovine cytochrome c oxidase structures enable O2 reduction with minimization of reactive oxygens and provide a proton-pumping gate.</title>
        <authorList>
            <person name="Muramoto K."/>
            <person name="Ohta K."/>
            <person name="Shinzawa-Itoh K."/>
            <person name="Kanda K."/>
            <person name="Taniguchi M."/>
            <person name="Nabekura H."/>
            <person name="Yamashita E."/>
            <person name="Tsukihara T."/>
            <person name="Yoshikawa S."/>
        </authorList>
    </citation>
    <scope>X-RAY CRYSTALLOGRAPHY (1.80 ANGSTROMS)</scope>
</reference>
<reference key="11">
    <citation type="journal article" date="2016" name="Elife">
        <title>Functional asymmetry and electron flow in the bovine respirasome.</title>
        <authorList>
            <person name="Sousa J.S."/>
            <person name="Mills D.J."/>
            <person name="Vonck J."/>
            <person name="Kuehlbrandt W."/>
        </authorList>
    </citation>
    <scope>STRUCTURE BY ELECTRON MICROSCOPY (9.10 ANGSTROMS)</scope>
</reference>
<reference key="12">
    <citation type="journal article" date="2016" name="J. Biol. Chem.">
        <title>The Mg2+-containing water cluster of mammalian cytochrome c oxidase collects four pumping proton equivalents in each catalytic cycle.</title>
        <authorList>
            <person name="Yano N."/>
            <person name="Muramoto K."/>
            <person name="Shimada A."/>
            <person name="Takemura S."/>
            <person name="Baba J."/>
            <person name="Fujisawa H."/>
            <person name="Mochizuki M."/>
            <person name="Shinzawa-Itoh K."/>
            <person name="Yamashita E."/>
            <person name="Tsukihara T."/>
            <person name="Yoshikawa S."/>
        </authorList>
    </citation>
    <scope>X-RAY CRYSTALLOGRAPHY (1.50 ANGSTROMS)</scope>
</reference>
<reference key="13">
    <citation type="journal article" date="2019" name="Proc. Natl. Acad. Sci. U.S.A.">
        <title>Monomeric structure of an active form of bovine cytochrome c oxidase.</title>
        <authorList>
            <person name="Shinzawa-Itoh K."/>
            <person name="Sugimura T."/>
            <person name="Misaki T."/>
            <person name="Tadehara Y."/>
            <person name="Yamamoto S."/>
            <person name="Hanada M."/>
            <person name="Yano N."/>
            <person name="Nakagawa T."/>
            <person name="Uene S."/>
            <person name="Yamada T."/>
            <person name="Aoyama H."/>
            <person name="Yamashita E."/>
            <person name="Tsukihara T."/>
            <person name="Yoshikawa S."/>
            <person name="Muramoto K."/>
        </authorList>
    </citation>
    <scope>X-RAY CRYSTALLOGRAPHY (1.85 ANGSTROMS)</scope>
</reference>
<keyword id="KW-0002">3D-structure</keyword>
<keyword id="KW-0903">Direct protein sequencing</keyword>
<keyword id="KW-0472">Membrane</keyword>
<keyword id="KW-0496">Mitochondrion</keyword>
<keyword id="KW-0999">Mitochondrion inner membrane</keyword>
<keyword id="KW-1185">Reference proteome</keyword>
<keyword id="KW-0809">Transit peptide</keyword>
<keyword id="KW-0812">Transmembrane</keyword>
<keyword id="KW-1133">Transmembrane helix</keyword>
<gene>
    <name type="primary">COX8B</name>
    <name type="synonym">COX8H</name>
</gene>
<protein>
    <recommendedName>
        <fullName>Cytochrome c oxidase subunit 8B, mitochondrial</fullName>
    </recommendedName>
    <alternativeName>
        <fullName>Cytochrome c oxidase polypeptide VIII-heart</fullName>
    </alternativeName>
    <alternativeName>
        <fullName>Cytochrome c oxidase subunit 8-1</fullName>
    </alternativeName>
    <alternativeName>
        <fullName>Cytochrome c oxidase subunit 8H</fullName>
    </alternativeName>
    <alternativeName>
        <fullName>IX</fullName>
    </alternativeName>
    <alternativeName>
        <fullName>VIIIb</fullName>
    </alternativeName>
</protein>
<proteinExistence type="evidence at protein level"/>
<comment type="function">
    <text evidence="3">Component of the cytochrome c oxidase, the last enzyme in the mitochondrial electron transport chain which drives oxidative phosphorylation. The respiratory chain contains 3 multisubunit complexes succinate dehydrogenase (complex II, CII), ubiquinol-cytochrome c oxidoreductase (cytochrome b-c1 complex, complex III, CIII) and cytochrome c oxidase (complex IV, CIV), that cooperate to transfer electrons derived from NADH and succinate to molecular oxygen, creating an electrochemical gradient over the inner membrane that drives transmembrane transport and the ATP synthase. Cytochrome c oxidase is the component of the respiratory chain that catalyzes the reduction of oxygen to water. Electrons originating from reduced cytochrome c in the intermembrane space (IMS) are transferred via the dinuclear copper A center (CU(A)) of subunit 2 and heme A of subunit 1 to the active site in subunit 1, a binuclear center (BNC) formed by heme A3 and copper B (CU(B)). The BNC reduces molecular oxygen to 2 water molecules using 4 electrons from cytochrome c in the IMS and 4 protons from the mitochondrial matrix.</text>
</comment>
<comment type="pathway">
    <text evidence="9">Energy metabolism; oxidative phosphorylation.</text>
</comment>
<comment type="subunit">
    <text evidence="2 4 7">Component of the cytochrome c oxidase (complex IV, CIV), a multisubunit enzyme composed of 14 subunits. The complex is composed of a catalytic core of 3 subunits MT-CO1, MT-CO2 and MT-CO3, encoded in the mitochondrial DNA, and 11 supernumerary subunits COX4I1 (or COX4I2), COX5A, COX5B, COX6A2 (or COX6A1), COX6B1 (or COX6B2), COX6C, COX7A1 (or COX7A2), COX7B, COX7C, COX8B and NDUFA4, which are encoded in the nuclear genome (PubMed:8638158). The complex exists as a monomer or a dimer and forms supercomplexes (SCs) in the inner mitochondrial membrane with NADH-ubiquinone oxidoreductase (complex I, CI) and ubiquinol-cytochrome c oxidoreductase (cytochrome b-c1 complex, complex III, CIII), resulting in different assemblies (supercomplex SCI(1)III(2)IV(1) and megacomplex MCI(2)III(2)IV(2)) (PubMed:26698328, PubMed:27830641).</text>
</comment>
<comment type="subcellular location">
    <subcellularLocation>
        <location evidence="3 5">Mitochondrion inner membrane</location>
        <topology evidence="3 5">Single-pass membrane protein</topology>
    </subcellularLocation>
</comment>
<comment type="similarity">
    <text evidence="8">Belongs to the cytochrome c oxidase VIII family.</text>
</comment>